<gene>
    <name evidence="1" type="primary">groES</name>
    <name evidence="1" type="synonym">groS</name>
    <name type="synonym">mopB</name>
    <name type="ordered locus">Cj1220</name>
</gene>
<accession>P56970</accession>
<accession>O69288</accession>
<accession>Q0P936</accession>
<comment type="function">
    <text evidence="1">Together with the chaperonin GroEL, plays an essential role in assisting protein folding. The GroEL-GroES system forms a nano-cage that allows encapsulation of the non-native substrate proteins and provides a physical environment optimized to promote and accelerate protein folding. GroES binds to the apical surface of the GroEL ring, thereby capping the opening of the GroEL channel.</text>
</comment>
<comment type="subunit">
    <text evidence="1">Heptamer of 7 subunits arranged in a ring. Interacts with the chaperonin GroEL.</text>
</comment>
<comment type="subcellular location">
    <subcellularLocation>
        <location evidence="1">Cytoplasm</location>
    </subcellularLocation>
</comment>
<comment type="similarity">
    <text evidence="1 2">Belongs to the GroES chaperonin family.</text>
</comment>
<dbReference type="EMBL" id="Y13334">
    <property type="protein sequence ID" value="CAA73777.1"/>
    <property type="molecule type" value="Genomic_DNA"/>
</dbReference>
<dbReference type="EMBL" id="AL111168">
    <property type="protein sequence ID" value="CAL35335.1"/>
    <property type="molecule type" value="Genomic_DNA"/>
</dbReference>
<dbReference type="PIR" id="F81328">
    <property type="entry name" value="F81328"/>
</dbReference>
<dbReference type="RefSeq" id="WP_002825273.1">
    <property type="nucleotide sequence ID" value="NZ_SZUC01000001.1"/>
</dbReference>
<dbReference type="RefSeq" id="YP_002344611.1">
    <property type="nucleotide sequence ID" value="NC_002163.1"/>
</dbReference>
<dbReference type="SMR" id="P56970"/>
<dbReference type="IntAct" id="P56970">
    <property type="interactions" value="38"/>
</dbReference>
<dbReference type="STRING" id="192222.Cj1220"/>
<dbReference type="PaxDb" id="192222-Cj1220"/>
<dbReference type="EnsemblBacteria" id="CAL35335">
    <property type="protein sequence ID" value="CAL35335"/>
    <property type="gene ID" value="Cj1220"/>
</dbReference>
<dbReference type="GeneID" id="905510"/>
<dbReference type="KEGG" id="cje:Cj1220"/>
<dbReference type="PATRIC" id="fig|192222.6.peg.1202"/>
<dbReference type="eggNOG" id="COG0234">
    <property type="taxonomic scope" value="Bacteria"/>
</dbReference>
<dbReference type="HOGENOM" id="CLU_132825_2_0_7"/>
<dbReference type="OrthoDB" id="9806791at2"/>
<dbReference type="PRO" id="PR:P56970"/>
<dbReference type="Proteomes" id="UP000000799">
    <property type="component" value="Chromosome"/>
</dbReference>
<dbReference type="GO" id="GO:0005737">
    <property type="term" value="C:cytoplasm"/>
    <property type="evidence" value="ECO:0007669"/>
    <property type="project" value="UniProtKB-SubCell"/>
</dbReference>
<dbReference type="GO" id="GO:0005524">
    <property type="term" value="F:ATP binding"/>
    <property type="evidence" value="ECO:0007669"/>
    <property type="project" value="InterPro"/>
</dbReference>
<dbReference type="GO" id="GO:0046872">
    <property type="term" value="F:metal ion binding"/>
    <property type="evidence" value="ECO:0007669"/>
    <property type="project" value="TreeGrafter"/>
</dbReference>
<dbReference type="GO" id="GO:0044183">
    <property type="term" value="F:protein folding chaperone"/>
    <property type="evidence" value="ECO:0007669"/>
    <property type="project" value="InterPro"/>
</dbReference>
<dbReference type="GO" id="GO:0051087">
    <property type="term" value="F:protein-folding chaperone binding"/>
    <property type="evidence" value="ECO:0007669"/>
    <property type="project" value="TreeGrafter"/>
</dbReference>
<dbReference type="GO" id="GO:0051082">
    <property type="term" value="F:unfolded protein binding"/>
    <property type="evidence" value="ECO:0007669"/>
    <property type="project" value="TreeGrafter"/>
</dbReference>
<dbReference type="GO" id="GO:0051085">
    <property type="term" value="P:chaperone cofactor-dependent protein refolding"/>
    <property type="evidence" value="ECO:0007669"/>
    <property type="project" value="TreeGrafter"/>
</dbReference>
<dbReference type="CDD" id="cd00320">
    <property type="entry name" value="cpn10"/>
    <property type="match status" value="1"/>
</dbReference>
<dbReference type="FunFam" id="2.30.33.40:FF:000001">
    <property type="entry name" value="10 kDa chaperonin"/>
    <property type="match status" value="1"/>
</dbReference>
<dbReference type="Gene3D" id="2.30.33.40">
    <property type="entry name" value="GroES chaperonin"/>
    <property type="match status" value="1"/>
</dbReference>
<dbReference type="HAMAP" id="MF_00580">
    <property type="entry name" value="CH10"/>
    <property type="match status" value="1"/>
</dbReference>
<dbReference type="InterPro" id="IPR020818">
    <property type="entry name" value="Chaperonin_GroES"/>
</dbReference>
<dbReference type="InterPro" id="IPR037124">
    <property type="entry name" value="Chaperonin_GroES_sf"/>
</dbReference>
<dbReference type="InterPro" id="IPR011032">
    <property type="entry name" value="GroES-like_sf"/>
</dbReference>
<dbReference type="NCBIfam" id="NF001537">
    <property type="entry name" value="PRK00364.3-3"/>
    <property type="match status" value="1"/>
</dbReference>
<dbReference type="PANTHER" id="PTHR10772">
    <property type="entry name" value="10 KDA HEAT SHOCK PROTEIN"/>
    <property type="match status" value="1"/>
</dbReference>
<dbReference type="PANTHER" id="PTHR10772:SF58">
    <property type="entry name" value="CO-CHAPERONIN GROES"/>
    <property type="match status" value="1"/>
</dbReference>
<dbReference type="Pfam" id="PF00166">
    <property type="entry name" value="Cpn10"/>
    <property type="match status" value="1"/>
</dbReference>
<dbReference type="PRINTS" id="PR00297">
    <property type="entry name" value="CHAPERONIN10"/>
</dbReference>
<dbReference type="SMART" id="SM00883">
    <property type="entry name" value="Cpn10"/>
    <property type="match status" value="1"/>
</dbReference>
<dbReference type="SUPFAM" id="SSF50129">
    <property type="entry name" value="GroES-like"/>
    <property type="match status" value="1"/>
</dbReference>
<feature type="chain" id="PRO_0000174724" description="Co-chaperonin GroES">
    <location>
        <begin position="1"/>
        <end position="86"/>
    </location>
</feature>
<evidence type="ECO:0000255" key="1">
    <source>
        <dbReference type="HAMAP-Rule" id="MF_00580"/>
    </source>
</evidence>
<evidence type="ECO:0000305" key="2"/>
<name>CH10_CAMJE</name>
<proteinExistence type="inferred from homology"/>
<keyword id="KW-0143">Chaperone</keyword>
<keyword id="KW-0963">Cytoplasm</keyword>
<keyword id="KW-1185">Reference proteome</keyword>
<protein>
    <recommendedName>
        <fullName evidence="1">Co-chaperonin GroES</fullName>
    </recommendedName>
    <alternativeName>
        <fullName evidence="1">10 kDa chaperonin</fullName>
    </alternativeName>
    <alternativeName>
        <fullName evidence="1">Chaperonin-10</fullName>
        <shortName evidence="1">Cpn10</shortName>
    </alternativeName>
</protein>
<organism>
    <name type="scientific">Campylobacter jejuni subsp. jejuni serotype O:2 (strain ATCC 700819 / NCTC 11168)</name>
    <dbReference type="NCBI Taxonomy" id="192222"/>
    <lineage>
        <taxon>Bacteria</taxon>
        <taxon>Pseudomonadati</taxon>
        <taxon>Campylobacterota</taxon>
        <taxon>Epsilonproteobacteria</taxon>
        <taxon>Campylobacterales</taxon>
        <taxon>Campylobacteraceae</taxon>
        <taxon>Campylobacter</taxon>
    </lineage>
</organism>
<reference key="1">
    <citation type="journal article" date="1999" name="Microbiology">
        <title>Cloning, sequencing and molecular analysis of the Campylobacter jejuni groESL bicistronic operon.</title>
        <authorList>
            <person name="Thies F.L."/>
            <person name="Weishaupt A."/>
            <person name="Karch H."/>
            <person name="Hartung H.P."/>
            <person name="Giegerich G."/>
        </authorList>
    </citation>
    <scope>NUCLEOTIDE SEQUENCE [GENOMIC DNA]</scope>
</reference>
<reference key="2">
    <citation type="journal article" date="2000" name="Nature">
        <title>The genome sequence of the food-borne pathogen Campylobacter jejuni reveals hypervariable sequences.</title>
        <authorList>
            <person name="Parkhill J."/>
            <person name="Wren B.W."/>
            <person name="Mungall K.L."/>
            <person name="Ketley J.M."/>
            <person name="Churcher C.M."/>
            <person name="Basham D."/>
            <person name="Chillingworth T."/>
            <person name="Davies R.M."/>
            <person name="Feltwell T."/>
            <person name="Holroyd S."/>
            <person name="Jagels K."/>
            <person name="Karlyshev A.V."/>
            <person name="Moule S."/>
            <person name="Pallen M.J."/>
            <person name="Penn C.W."/>
            <person name="Quail M.A."/>
            <person name="Rajandream M.A."/>
            <person name="Rutherford K.M."/>
            <person name="van Vliet A.H.M."/>
            <person name="Whitehead S."/>
            <person name="Barrell B.G."/>
        </authorList>
    </citation>
    <scope>NUCLEOTIDE SEQUENCE [LARGE SCALE GENOMIC DNA]</scope>
    <source>
        <strain>ATCC 700819 / NCTC 11168</strain>
    </source>
</reference>
<sequence length="86" mass="9458">MNFQPLGKRVLVKRVEETKTTASGIIIPDNAKEKPLMGEVVAVSKEITDIANGDKIVFAKYGGTEIKLDNNEYLVLNLDDILGILK</sequence>